<reference key="1">
    <citation type="submission" date="2007-06" db="EMBL/GenBank/DDBJ databases">
        <title>Complete sequence of chromosome of Staphylococcus aureus subsp. aureus JH1.</title>
        <authorList>
            <consortium name="US DOE Joint Genome Institute"/>
            <person name="Copeland A."/>
            <person name="Lucas S."/>
            <person name="Lapidus A."/>
            <person name="Barry K."/>
            <person name="Detter J.C."/>
            <person name="Glavina del Rio T."/>
            <person name="Hammon N."/>
            <person name="Israni S."/>
            <person name="Dalin E."/>
            <person name="Tice H."/>
            <person name="Pitluck S."/>
            <person name="Chain P."/>
            <person name="Malfatti S."/>
            <person name="Shin M."/>
            <person name="Vergez L."/>
            <person name="Schmutz J."/>
            <person name="Larimer F."/>
            <person name="Land M."/>
            <person name="Hauser L."/>
            <person name="Kyrpides N."/>
            <person name="Ivanova N."/>
            <person name="Tomasz A."/>
            <person name="Richardson P."/>
        </authorList>
    </citation>
    <scope>NUCLEOTIDE SEQUENCE [LARGE SCALE GENOMIC DNA]</scope>
    <source>
        <strain>JH1</strain>
    </source>
</reference>
<gene>
    <name evidence="1" type="primary">rpmG1</name>
    <name type="ordered locus">SaurJH1_0571</name>
</gene>
<evidence type="ECO:0000255" key="1">
    <source>
        <dbReference type="HAMAP-Rule" id="MF_00294"/>
    </source>
</evidence>
<organism>
    <name type="scientific">Staphylococcus aureus (strain JH1)</name>
    <dbReference type="NCBI Taxonomy" id="359787"/>
    <lineage>
        <taxon>Bacteria</taxon>
        <taxon>Bacillati</taxon>
        <taxon>Bacillota</taxon>
        <taxon>Bacilli</taxon>
        <taxon>Bacillales</taxon>
        <taxon>Staphylococcaceae</taxon>
        <taxon>Staphylococcus</taxon>
    </lineage>
</organism>
<proteinExistence type="inferred from homology"/>
<keyword id="KW-0687">Ribonucleoprotein</keyword>
<keyword id="KW-0689">Ribosomal protein</keyword>
<feature type="chain" id="PRO_0000356681" description="Large ribosomal subunit protein bL33A">
    <location>
        <begin position="1"/>
        <end position="47"/>
    </location>
</feature>
<protein>
    <recommendedName>
        <fullName evidence="1">Large ribosomal subunit protein bL33A</fullName>
    </recommendedName>
    <alternativeName>
        <fullName evidence="1">50S ribosomal protein L33 1</fullName>
    </alternativeName>
</protein>
<sequence>MRKIPLNCEACGNRNYNVPKQEGSATRLTLKKYCPKCNAHTIHKESK</sequence>
<accession>A6TZ11</accession>
<comment type="similarity">
    <text evidence="1">Belongs to the bacterial ribosomal protein bL33 family.</text>
</comment>
<dbReference type="EMBL" id="CP000736">
    <property type="protein sequence ID" value="ABR51429.1"/>
    <property type="molecule type" value="Genomic_DNA"/>
</dbReference>
<dbReference type="SMR" id="A6TZ11"/>
<dbReference type="KEGG" id="sah:SaurJH1_0571"/>
<dbReference type="HOGENOM" id="CLU_190949_0_1_9"/>
<dbReference type="GO" id="GO:0005737">
    <property type="term" value="C:cytoplasm"/>
    <property type="evidence" value="ECO:0007669"/>
    <property type="project" value="UniProtKB-ARBA"/>
</dbReference>
<dbReference type="GO" id="GO:1990904">
    <property type="term" value="C:ribonucleoprotein complex"/>
    <property type="evidence" value="ECO:0007669"/>
    <property type="project" value="UniProtKB-KW"/>
</dbReference>
<dbReference type="GO" id="GO:0005840">
    <property type="term" value="C:ribosome"/>
    <property type="evidence" value="ECO:0007669"/>
    <property type="project" value="UniProtKB-KW"/>
</dbReference>
<dbReference type="GO" id="GO:0003735">
    <property type="term" value="F:structural constituent of ribosome"/>
    <property type="evidence" value="ECO:0007669"/>
    <property type="project" value="InterPro"/>
</dbReference>
<dbReference type="GO" id="GO:0006412">
    <property type="term" value="P:translation"/>
    <property type="evidence" value="ECO:0007669"/>
    <property type="project" value="UniProtKB-UniRule"/>
</dbReference>
<dbReference type="Gene3D" id="2.20.28.120">
    <property type="entry name" value="Ribosomal protein L33"/>
    <property type="match status" value="1"/>
</dbReference>
<dbReference type="HAMAP" id="MF_00294">
    <property type="entry name" value="Ribosomal_bL33"/>
    <property type="match status" value="1"/>
</dbReference>
<dbReference type="InterPro" id="IPR001705">
    <property type="entry name" value="Ribosomal_bL33"/>
</dbReference>
<dbReference type="InterPro" id="IPR018264">
    <property type="entry name" value="Ribosomal_bL33_CS"/>
</dbReference>
<dbReference type="InterPro" id="IPR038584">
    <property type="entry name" value="Ribosomal_bL33_sf"/>
</dbReference>
<dbReference type="InterPro" id="IPR011332">
    <property type="entry name" value="Ribosomal_zn-bd"/>
</dbReference>
<dbReference type="NCBIfam" id="NF001764">
    <property type="entry name" value="PRK00504.1"/>
    <property type="match status" value="1"/>
</dbReference>
<dbReference type="NCBIfam" id="TIGR01023">
    <property type="entry name" value="rpmG_bact"/>
    <property type="match status" value="1"/>
</dbReference>
<dbReference type="Pfam" id="PF00471">
    <property type="entry name" value="Ribosomal_L33"/>
    <property type="match status" value="1"/>
</dbReference>
<dbReference type="SUPFAM" id="SSF57829">
    <property type="entry name" value="Zn-binding ribosomal proteins"/>
    <property type="match status" value="1"/>
</dbReference>
<dbReference type="PROSITE" id="PS00582">
    <property type="entry name" value="RIBOSOMAL_L33"/>
    <property type="match status" value="1"/>
</dbReference>
<name>RL331_STAA2</name>